<evidence type="ECO:0000250" key="1"/>
<evidence type="ECO:0000255" key="2"/>
<evidence type="ECO:0000255" key="3">
    <source>
        <dbReference type="PROSITE-ProRule" id="PRU01082"/>
    </source>
</evidence>
<evidence type="ECO:0000269" key="4">
    <source>
    </source>
</evidence>
<evidence type="ECO:0000269" key="5">
    <source>
    </source>
</evidence>
<evidence type="ECO:0000269" key="6">
    <source>
    </source>
</evidence>
<evidence type="ECO:0000269" key="7">
    <source>
    </source>
</evidence>
<evidence type="ECO:0000305" key="8"/>
<sequence length="511" mass="56062">MEEISPAVALTLGLANTMCDSGISSTFDISELENVTDAADMLCNQKRQRYSNGVVDCIMGSVSEEKTLSEVRSLSSDFSVTVQESEEDEPLVSDATIISEGLIVVDARSEISLPDTVETDNGRVLATAIILNETTIEQVPTAEVLIASLNHDVNMEVATSEVVIRLPEENPNVARGSRSVYELECIPLWGTISICGGRSEMEDAVRALPHFLKIPIKMLMGDHEGMSPSLPYLTSHFFGVYDGHGGAQVADYCHDRIHSALAEEIERIKEELCRRNTGEGRQVQWEKVFVDCYLKVDDEVKGKINRPVVGSSDRMVLEAVSPETVGSTAVVALVCSSHIIVSNCGDSRAVLLRGKDSMPLSVDHKPDREDEYARIEKAGGKVIQWQGARVSGVLAMSRSIGDQYLEPFVIPDPEVTFMPRAREDECLILASDGLWDVMSNQEACDFARRRILAWHKKNGALPLAERGVGEDQACQAAAEYLSKLAIQMGSKDNISIIVIDLKAQRKFKTRS</sequence>
<dbReference type="EC" id="3.1.3.16"/>
<dbReference type="EMBL" id="AC022492">
    <property type="protein sequence ID" value="AAF79469.1"/>
    <property type="status" value="ALT_SEQ"/>
    <property type="molecule type" value="Genomic_DNA"/>
</dbReference>
<dbReference type="EMBL" id="CP002684">
    <property type="protein sequence ID" value="AEE29605.1"/>
    <property type="molecule type" value="Genomic_DNA"/>
</dbReference>
<dbReference type="EMBL" id="CP002684">
    <property type="protein sequence ID" value="ANM60722.1"/>
    <property type="molecule type" value="Genomic_DNA"/>
</dbReference>
<dbReference type="EMBL" id="AK118656">
    <property type="protein sequence ID" value="BAC43252.1"/>
    <property type="molecule type" value="mRNA"/>
</dbReference>
<dbReference type="RefSeq" id="NP_001322988.1">
    <property type="nucleotide sequence ID" value="NM_001332312.1"/>
</dbReference>
<dbReference type="RefSeq" id="NP_173199.2">
    <property type="nucleotide sequence ID" value="NM_101618.3"/>
</dbReference>
<dbReference type="SMR" id="Q9LNP9"/>
<dbReference type="BioGRID" id="23570">
    <property type="interactions" value="7"/>
</dbReference>
<dbReference type="DIP" id="DIP-48989N"/>
<dbReference type="FunCoup" id="Q9LNP9">
    <property type="interactions" value="616"/>
</dbReference>
<dbReference type="IntAct" id="Q9LNP9">
    <property type="interactions" value="10"/>
</dbReference>
<dbReference type="STRING" id="3702.Q9LNP9"/>
<dbReference type="PaxDb" id="3702-AT1G17550.1"/>
<dbReference type="ProteomicsDB" id="248870"/>
<dbReference type="EnsemblPlants" id="AT1G17550.1">
    <property type="protein sequence ID" value="AT1G17550.1"/>
    <property type="gene ID" value="AT1G17550"/>
</dbReference>
<dbReference type="EnsemblPlants" id="AT1G17550.2">
    <property type="protein sequence ID" value="AT1G17550.2"/>
    <property type="gene ID" value="AT1G17550"/>
</dbReference>
<dbReference type="GeneID" id="838330"/>
<dbReference type="Gramene" id="AT1G17550.1">
    <property type="protein sequence ID" value="AT1G17550.1"/>
    <property type="gene ID" value="AT1G17550"/>
</dbReference>
<dbReference type="Gramene" id="AT1G17550.2">
    <property type="protein sequence ID" value="AT1G17550.2"/>
    <property type="gene ID" value="AT1G17550"/>
</dbReference>
<dbReference type="KEGG" id="ath:AT1G17550"/>
<dbReference type="Araport" id="AT1G17550"/>
<dbReference type="TAIR" id="AT1G17550">
    <property type="gene designation" value="HAB2"/>
</dbReference>
<dbReference type="eggNOG" id="KOG0698">
    <property type="taxonomic scope" value="Eukaryota"/>
</dbReference>
<dbReference type="HOGENOM" id="CLU_013173_20_5_1"/>
<dbReference type="InParanoid" id="Q9LNP9"/>
<dbReference type="OMA" id="WGYASIC"/>
<dbReference type="PhylomeDB" id="Q9LNP9"/>
<dbReference type="PRO" id="PR:Q9LNP9"/>
<dbReference type="Proteomes" id="UP000006548">
    <property type="component" value="Chromosome 1"/>
</dbReference>
<dbReference type="ExpressionAtlas" id="Q9LNP9">
    <property type="expression patterns" value="baseline and differential"/>
</dbReference>
<dbReference type="GO" id="GO:0046872">
    <property type="term" value="F:metal ion binding"/>
    <property type="evidence" value="ECO:0007669"/>
    <property type="project" value="UniProtKB-KW"/>
</dbReference>
<dbReference type="GO" id="GO:0004722">
    <property type="term" value="F:protein serine/threonine phosphatase activity"/>
    <property type="evidence" value="ECO:0007669"/>
    <property type="project" value="UniProtKB-EC"/>
</dbReference>
<dbReference type="GO" id="GO:0009738">
    <property type="term" value="P:abscisic acid-activated signaling pathway"/>
    <property type="evidence" value="ECO:0007669"/>
    <property type="project" value="UniProtKB-KW"/>
</dbReference>
<dbReference type="CDD" id="cd00143">
    <property type="entry name" value="PP2Cc"/>
    <property type="match status" value="1"/>
</dbReference>
<dbReference type="FunFam" id="3.60.40.10:FF:000025">
    <property type="entry name" value="Protein phosphatase 2C 16"/>
    <property type="match status" value="1"/>
</dbReference>
<dbReference type="Gene3D" id="3.60.40.10">
    <property type="entry name" value="PPM-type phosphatase domain"/>
    <property type="match status" value="1"/>
</dbReference>
<dbReference type="InterPro" id="IPR015655">
    <property type="entry name" value="PP2C"/>
</dbReference>
<dbReference type="InterPro" id="IPR000222">
    <property type="entry name" value="PP2C_BS"/>
</dbReference>
<dbReference type="InterPro" id="IPR036457">
    <property type="entry name" value="PPM-type-like_dom_sf"/>
</dbReference>
<dbReference type="InterPro" id="IPR001932">
    <property type="entry name" value="PPM-type_phosphatase-like_dom"/>
</dbReference>
<dbReference type="PANTHER" id="PTHR47992">
    <property type="entry name" value="PROTEIN PHOSPHATASE"/>
    <property type="match status" value="1"/>
</dbReference>
<dbReference type="Pfam" id="PF00481">
    <property type="entry name" value="PP2C"/>
    <property type="match status" value="1"/>
</dbReference>
<dbReference type="SMART" id="SM00332">
    <property type="entry name" value="PP2Cc"/>
    <property type="match status" value="1"/>
</dbReference>
<dbReference type="SUPFAM" id="SSF81606">
    <property type="entry name" value="PP2C-like"/>
    <property type="match status" value="1"/>
</dbReference>
<dbReference type="PROSITE" id="PS01032">
    <property type="entry name" value="PPM_1"/>
    <property type="match status" value="1"/>
</dbReference>
<dbReference type="PROSITE" id="PS51746">
    <property type="entry name" value="PPM_2"/>
    <property type="match status" value="1"/>
</dbReference>
<proteinExistence type="evidence at protein level"/>
<protein>
    <recommendedName>
        <fullName>Protein phosphatase 2C 7</fullName>
        <shortName>AtPP2C07</shortName>
        <ecNumber>3.1.3.16</ecNumber>
    </recommendedName>
    <alternativeName>
        <fullName>Protein HYPERSENSITIVE TO ABA 2</fullName>
    </alternativeName>
    <alternativeName>
        <fullName>Protein phosphatase 2C HAB2</fullName>
        <shortName>PP2C HAB2</shortName>
    </alternativeName>
</protein>
<reference key="1">
    <citation type="journal article" date="2000" name="Nature">
        <title>Sequence and analysis of chromosome 1 of the plant Arabidopsis thaliana.</title>
        <authorList>
            <person name="Theologis A."/>
            <person name="Ecker J.R."/>
            <person name="Palm C.J."/>
            <person name="Federspiel N.A."/>
            <person name="Kaul S."/>
            <person name="White O."/>
            <person name="Alonso J."/>
            <person name="Altafi H."/>
            <person name="Araujo R."/>
            <person name="Bowman C.L."/>
            <person name="Brooks S.Y."/>
            <person name="Buehler E."/>
            <person name="Chan A."/>
            <person name="Chao Q."/>
            <person name="Chen H."/>
            <person name="Cheuk R.F."/>
            <person name="Chin C.W."/>
            <person name="Chung M.K."/>
            <person name="Conn L."/>
            <person name="Conway A.B."/>
            <person name="Conway A.R."/>
            <person name="Creasy T.H."/>
            <person name="Dewar K."/>
            <person name="Dunn P."/>
            <person name="Etgu P."/>
            <person name="Feldblyum T.V."/>
            <person name="Feng J.-D."/>
            <person name="Fong B."/>
            <person name="Fujii C.Y."/>
            <person name="Gill J.E."/>
            <person name="Goldsmith A.D."/>
            <person name="Haas B."/>
            <person name="Hansen N.F."/>
            <person name="Hughes B."/>
            <person name="Huizar L."/>
            <person name="Hunter J.L."/>
            <person name="Jenkins J."/>
            <person name="Johnson-Hopson C."/>
            <person name="Khan S."/>
            <person name="Khaykin E."/>
            <person name="Kim C.J."/>
            <person name="Koo H.L."/>
            <person name="Kremenetskaia I."/>
            <person name="Kurtz D.B."/>
            <person name="Kwan A."/>
            <person name="Lam B."/>
            <person name="Langin-Hooper S."/>
            <person name="Lee A."/>
            <person name="Lee J.M."/>
            <person name="Lenz C.A."/>
            <person name="Li J.H."/>
            <person name="Li Y.-P."/>
            <person name="Lin X."/>
            <person name="Liu S.X."/>
            <person name="Liu Z.A."/>
            <person name="Luros J.S."/>
            <person name="Maiti R."/>
            <person name="Marziali A."/>
            <person name="Militscher J."/>
            <person name="Miranda M."/>
            <person name="Nguyen M."/>
            <person name="Nierman W.C."/>
            <person name="Osborne B.I."/>
            <person name="Pai G."/>
            <person name="Peterson J."/>
            <person name="Pham P.K."/>
            <person name="Rizzo M."/>
            <person name="Rooney T."/>
            <person name="Rowley D."/>
            <person name="Sakano H."/>
            <person name="Salzberg S.L."/>
            <person name="Schwartz J.R."/>
            <person name="Shinn P."/>
            <person name="Southwick A.M."/>
            <person name="Sun H."/>
            <person name="Tallon L.J."/>
            <person name="Tambunga G."/>
            <person name="Toriumi M.J."/>
            <person name="Town C.D."/>
            <person name="Utterback T."/>
            <person name="Van Aken S."/>
            <person name="Vaysberg M."/>
            <person name="Vysotskaia V.S."/>
            <person name="Walker M."/>
            <person name="Wu D."/>
            <person name="Yu G."/>
            <person name="Fraser C.M."/>
            <person name="Venter J.C."/>
            <person name="Davis R.W."/>
        </authorList>
    </citation>
    <scope>NUCLEOTIDE SEQUENCE [LARGE SCALE GENOMIC DNA]</scope>
    <source>
        <strain>cv. Columbia</strain>
    </source>
</reference>
<reference key="2">
    <citation type="journal article" date="2017" name="Plant J.">
        <title>Araport11: a complete reannotation of the Arabidopsis thaliana reference genome.</title>
        <authorList>
            <person name="Cheng C.Y."/>
            <person name="Krishnakumar V."/>
            <person name="Chan A.P."/>
            <person name="Thibaud-Nissen F."/>
            <person name="Schobel S."/>
            <person name="Town C.D."/>
        </authorList>
    </citation>
    <scope>GENOME REANNOTATION</scope>
    <source>
        <strain>cv. Columbia</strain>
    </source>
</reference>
<reference key="3">
    <citation type="journal article" date="2002" name="Science">
        <title>Functional annotation of a full-length Arabidopsis cDNA collection.</title>
        <authorList>
            <person name="Seki M."/>
            <person name="Narusaka M."/>
            <person name="Kamiya A."/>
            <person name="Ishida J."/>
            <person name="Satou M."/>
            <person name="Sakurai T."/>
            <person name="Nakajima M."/>
            <person name="Enju A."/>
            <person name="Akiyama K."/>
            <person name="Oono Y."/>
            <person name="Muramatsu M."/>
            <person name="Hayashizaki Y."/>
            <person name="Kawai J."/>
            <person name="Carninci P."/>
            <person name="Itoh M."/>
            <person name="Ishii Y."/>
            <person name="Arakawa T."/>
            <person name="Shibata K."/>
            <person name="Shinagawa A."/>
            <person name="Shinozaki K."/>
        </authorList>
    </citation>
    <scope>NUCLEOTIDE SEQUENCE [LARGE SCALE MRNA]</scope>
    <source>
        <strain>cv. Columbia</strain>
    </source>
</reference>
<reference key="4">
    <citation type="journal article" date="2004" name="Plant J.">
        <title>Gain-of-function and loss-of-function phenotypes of the protein phosphatase 2C HAB1 reveal its role as a negative regulator of abscisic acid signalling.</title>
        <authorList>
            <person name="Saez A."/>
            <person name="Apostolova N."/>
            <person name="Gonzalez-Guzman M."/>
            <person name="Gonzalez-Garcia M.P."/>
            <person name="Nicolas C."/>
            <person name="Lorenzo O."/>
            <person name="Rodriguez P.L."/>
        </authorList>
    </citation>
    <scope>INDUCTION BY ABA</scope>
</reference>
<reference key="5">
    <citation type="journal article" date="2004" name="Trends Plant Sci.">
        <title>Plant PP2C phosphatases: emerging functions in stress signaling.</title>
        <authorList>
            <person name="Schweighofer A."/>
            <person name="Hirt H."/>
            <person name="Meskiene I."/>
        </authorList>
    </citation>
    <scope>GENE FAMILY</scope>
    <scope>NOMENCLATURE</scope>
</reference>
<reference key="6">
    <citation type="journal article" date="2006" name="Plant Physiol.">
        <title>ABA-hypersensitive germination3 encodes a protein phosphatase 2C (AtPP2CA) that strongly regulates abscisic acid signaling during germination among Arabidopsis protein phosphatase 2Cs.</title>
        <authorList>
            <person name="Yoshida T."/>
            <person name="Nishimura N."/>
            <person name="Kitahata N."/>
            <person name="Kuromori T."/>
            <person name="Ito T."/>
            <person name="Asami T."/>
            <person name="Shinozaki K."/>
            <person name="Hirayama T."/>
        </authorList>
    </citation>
    <scope>INDUCTION BY ABA</scope>
    <scope>TISSUE SPECIFICITY</scope>
</reference>
<reference key="7">
    <citation type="journal article" date="2008" name="BMC Genomics">
        <title>Genome-wide and expression analysis of protein phosphatase 2C in rice and Arabidopsis.</title>
        <authorList>
            <person name="Xue T."/>
            <person name="Wang D."/>
            <person name="Zhang S."/>
            <person name="Ehlting J."/>
            <person name="Ni F."/>
            <person name="Jacab S."/>
            <person name="Zheng C."/>
            <person name="Zhong Y."/>
        </authorList>
    </citation>
    <scope>GENE FAMILY</scope>
    <scope>NOMENCLATURE</scope>
</reference>
<reference key="8">
    <citation type="journal article" date="2008" name="Plant Physiol.">
        <title>Overexpression of AtMYB44 enhances stomatal closure to confer abiotic stress tolerance in transgenic Arabidopsis.</title>
        <authorList>
            <person name="Jung C."/>
            <person name="Seo J.S."/>
            <person name="Han S.W."/>
            <person name="Koo Y.J."/>
            <person name="Kim C.H."/>
            <person name="Song S.I."/>
            <person name="Nahm B.H."/>
            <person name="Choi Y.D."/>
            <person name="Cheong J.-J."/>
        </authorList>
    </citation>
    <scope>INDUCTION BY MYB44</scope>
</reference>
<reference key="9">
    <citation type="journal article" date="2013" name="Cell Res.">
        <title>Molecular basis for the selective and ABA-independent inhibition of PP2CA by PYL13.</title>
        <authorList>
            <person name="Li W."/>
            <person name="Wang L."/>
            <person name="Sheng X."/>
            <person name="Yan C."/>
            <person name="Zhou R."/>
            <person name="Hang J."/>
            <person name="Yin P."/>
            <person name="Yan N."/>
        </authorList>
    </citation>
    <scope>INTERACTION WITH PYL13</scope>
</reference>
<feature type="signal peptide" evidence="2">
    <location>
        <begin position="1"/>
        <end position="19"/>
    </location>
</feature>
<feature type="chain" id="PRO_0000344525" description="Protein phosphatase 2C 7">
    <location>
        <begin position="20"/>
        <end position="511"/>
    </location>
</feature>
<feature type="domain" description="PPM-type phosphatase" evidence="3">
    <location>
        <begin position="188"/>
        <end position="501"/>
    </location>
</feature>
<feature type="binding site" evidence="1">
    <location>
        <position position="242"/>
    </location>
    <ligand>
        <name>Mn(2+)</name>
        <dbReference type="ChEBI" id="CHEBI:29035"/>
        <label>1</label>
    </ligand>
</feature>
<feature type="binding site" evidence="1">
    <location>
        <position position="242"/>
    </location>
    <ligand>
        <name>Mn(2+)</name>
        <dbReference type="ChEBI" id="CHEBI:29035"/>
        <label>2</label>
    </ligand>
</feature>
<feature type="binding site" evidence="1">
    <location>
        <position position="243"/>
    </location>
    <ligand>
        <name>Mn(2+)</name>
        <dbReference type="ChEBI" id="CHEBI:29035"/>
        <label>1</label>
    </ligand>
</feature>
<feature type="binding site" evidence="1">
    <location>
        <position position="432"/>
    </location>
    <ligand>
        <name>Mn(2+)</name>
        <dbReference type="ChEBI" id="CHEBI:29035"/>
        <label>2</label>
    </ligand>
</feature>
<feature type="binding site" evidence="1">
    <location>
        <position position="492"/>
    </location>
    <ligand>
        <name>Mn(2+)</name>
        <dbReference type="ChEBI" id="CHEBI:29035"/>
        <label>2</label>
    </ligand>
</feature>
<feature type="sequence conflict" description="In Ref. 3; BAC43252." evidence="8" ref="3">
    <original>Q</original>
    <variation>R</variation>
    <location>
        <position position="475"/>
    </location>
</feature>
<name>P2C07_ARATH</name>
<gene>
    <name type="primary">HAB2</name>
    <name type="ordered locus">At1g17550</name>
    <name type="ORF">F1L3.32</name>
</gene>
<comment type="function">
    <text evidence="1">Key component and repressor of the abscisic acid (ABA) signaling pathway that regulates numerous ABA responses, such as stomatal closure, seed germination and inhibition of vegetative growth.</text>
</comment>
<comment type="catalytic activity">
    <reaction>
        <text>O-phospho-L-seryl-[protein] + H2O = L-seryl-[protein] + phosphate</text>
        <dbReference type="Rhea" id="RHEA:20629"/>
        <dbReference type="Rhea" id="RHEA-COMP:9863"/>
        <dbReference type="Rhea" id="RHEA-COMP:11604"/>
        <dbReference type="ChEBI" id="CHEBI:15377"/>
        <dbReference type="ChEBI" id="CHEBI:29999"/>
        <dbReference type="ChEBI" id="CHEBI:43474"/>
        <dbReference type="ChEBI" id="CHEBI:83421"/>
        <dbReference type="EC" id="3.1.3.16"/>
    </reaction>
</comment>
<comment type="catalytic activity">
    <reaction>
        <text>O-phospho-L-threonyl-[protein] + H2O = L-threonyl-[protein] + phosphate</text>
        <dbReference type="Rhea" id="RHEA:47004"/>
        <dbReference type="Rhea" id="RHEA-COMP:11060"/>
        <dbReference type="Rhea" id="RHEA-COMP:11605"/>
        <dbReference type="ChEBI" id="CHEBI:15377"/>
        <dbReference type="ChEBI" id="CHEBI:30013"/>
        <dbReference type="ChEBI" id="CHEBI:43474"/>
        <dbReference type="ChEBI" id="CHEBI:61977"/>
        <dbReference type="EC" id="3.1.3.16"/>
    </reaction>
</comment>
<comment type="cofactor">
    <cofactor evidence="1">
        <name>Mg(2+)</name>
        <dbReference type="ChEBI" id="CHEBI:18420"/>
    </cofactor>
    <cofactor evidence="1">
        <name>Mn(2+)</name>
        <dbReference type="ChEBI" id="CHEBI:29035"/>
    </cofactor>
    <text evidence="1">Binds 2 magnesium or manganese ions per subunit.</text>
</comment>
<comment type="subunit">
    <text evidence="7">Interacts with PYL13.</text>
</comment>
<comment type="interaction">
    <interactant intactId="EBI-15803614">
        <id>Q9LNP9</id>
    </interactant>
    <interactant intactId="EBI-2363213">
        <id>Q8H1R0</id>
        <label>PYL10</label>
    </interactant>
    <organismsDiffer>false</organismsDiffer>
    <experiments>3</experiments>
</comment>
<comment type="interaction">
    <interactant intactId="EBI-15803614">
        <id>Q9LNP9</id>
    </interactant>
    <interactant intactId="EBI-2363181">
        <id>Q9FLB1</id>
        <label>PYL5</label>
    </interactant>
    <organismsDiffer>false</organismsDiffer>
    <experiments>5</experiments>
</comment>
<comment type="interaction">
    <interactant intactId="EBI-15803614">
        <id>Q9LNP9</id>
    </interactant>
    <interactant intactId="EBI-2363192">
        <id>Q8S8E3</id>
        <label>PYL6</label>
    </interactant>
    <organismsDiffer>false</organismsDiffer>
    <experiments>5</experiments>
</comment>
<comment type="interaction">
    <interactant intactId="EBI-15803614">
        <id>Q9LNP9</id>
    </interactant>
    <interactant intactId="EBI-2363203">
        <id>Q1ECF1</id>
        <label>PYL7</label>
    </interactant>
    <organismsDiffer>false</organismsDiffer>
    <experiments>3</experiments>
</comment>
<comment type="interaction">
    <interactant intactId="EBI-15803614">
        <id>Q9LNP9</id>
    </interactant>
    <interactant intactId="EBI-2429535">
        <id>Q9FGM1</id>
        <label>PYL8</label>
    </interactant>
    <organismsDiffer>false</organismsDiffer>
    <experiments>5</experiments>
</comment>
<comment type="interaction">
    <interactant intactId="EBI-15803614">
        <id>Q9LNP9</id>
    </interactant>
    <interactant intactId="EBI-2349513">
        <id>Q84MC7</id>
        <label>PYL9</label>
    </interactant>
    <organismsDiffer>false</organismsDiffer>
    <experiments>3</experiments>
</comment>
<comment type="tissue specificity">
    <text evidence="5">Expressed in seeds.</text>
</comment>
<comment type="induction">
    <text evidence="4 5 6">Repressed by MYB44. Induced by ABA.</text>
</comment>
<comment type="similarity">
    <text evidence="8">Belongs to the PP2C family.</text>
</comment>
<comment type="sequence caution" evidence="8">
    <conflict type="erroneous gene model prediction">
        <sequence resource="EMBL-CDS" id="AAF79469"/>
    </conflict>
</comment>
<keyword id="KW-0938">Abscisic acid signaling pathway</keyword>
<keyword id="KW-0378">Hydrolase</keyword>
<keyword id="KW-0460">Magnesium</keyword>
<keyword id="KW-0464">Manganese</keyword>
<keyword id="KW-0479">Metal-binding</keyword>
<keyword id="KW-0904">Protein phosphatase</keyword>
<keyword id="KW-1185">Reference proteome</keyword>
<keyword id="KW-0732">Signal</keyword>
<organism>
    <name type="scientific">Arabidopsis thaliana</name>
    <name type="common">Mouse-ear cress</name>
    <dbReference type="NCBI Taxonomy" id="3702"/>
    <lineage>
        <taxon>Eukaryota</taxon>
        <taxon>Viridiplantae</taxon>
        <taxon>Streptophyta</taxon>
        <taxon>Embryophyta</taxon>
        <taxon>Tracheophyta</taxon>
        <taxon>Spermatophyta</taxon>
        <taxon>Magnoliopsida</taxon>
        <taxon>eudicotyledons</taxon>
        <taxon>Gunneridae</taxon>
        <taxon>Pentapetalae</taxon>
        <taxon>rosids</taxon>
        <taxon>malvids</taxon>
        <taxon>Brassicales</taxon>
        <taxon>Brassicaceae</taxon>
        <taxon>Camelineae</taxon>
        <taxon>Arabidopsis</taxon>
    </lineage>
</organism>
<accession>Q9LNP9</accession>
<accession>Q8GWS8</accession>